<feature type="chain" id="PRO_0000388797" description="Homeobox protein 14">
    <location>
        <begin position="1"/>
        <end position="455"/>
    </location>
</feature>
<feature type="DNA-binding region" description="Homeobox 1" evidence="2">
    <location>
        <begin position="310"/>
        <end position="369"/>
    </location>
</feature>
<feature type="DNA-binding region" description="Homeobox 2" evidence="2">
    <location>
        <begin position="372"/>
        <end position="431"/>
    </location>
</feature>
<feature type="region of interest" description="Disordered" evidence="3">
    <location>
        <begin position="1"/>
        <end position="53"/>
    </location>
</feature>
<feature type="region of interest" description="Disordered" evidence="3">
    <location>
        <begin position="67"/>
        <end position="121"/>
    </location>
</feature>
<feature type="region of interest" description="Disordered" evidence="3">
    <location>
        <begin position="178"/>
        <end position="239"/>
    </location>
</feature>
<feature type="region of interest" description="Disordered" evidence="3">
    <location>
        <begin position="258"/>
        <end position="296"/>
    </location>
</feature>
<feature type="region of interest" description="Disordered" evidence="3">
    <location>
        <begin position="431"/>
        <end position="455"/>
    </location>
</feature>
<feature type="compositionally biased region" description="Low complexity" evidence="3">
    <location>
        <begin position="1"/>
        <end position="16"/>
    </location>
</feature>
<feature type="compositionally biased region" description="Low complexity" evidence="3">
    <location>
        <begin position="24"/>
        <end position="39"/>
    </location>
</feature>
<feature type="compositionally biased region" description="Low complexity" evidence="3">
    <location>
        <begin position="81"/>
        <end position="118"/>
    </location>
</feature>
<feature type="compositionally biased region" description="Low complexity" evidence="3">
    <location>
        <begin position="179"/>
        <end position="239"/>
    </location>
</feature>
<feature type="compositionally biased region" description="Low complexity" evidence="3">
    <location>
        <begin position="263"/>
        <end position="294"/>
    </location>
</feature>
<feature type="compositionally biased region" description="Low complexity" evidence="3">
    <location>
        <begin position="435"/>
        <end position="445"/>
    </location>
</feature>
<feature type="compositionally biased region" description="Acidic residues" evidence="3">
    <location>
        <begin position="446"/>
        <end position="455"/>
    </location>
</feature>
<comment type="function">
    <text evidence="1">Putative transcription factor.</text>
</comment>
<comment type="subcellular location">
    <subcellularLocation>
        <location evidence="2">Nucleus</location>
    </subcellularLocation>
</comment>
<organism>
    <name type="scientific">Dictyostelium discoideum</name>
    <name type="common">Social amoeba</name>
    <dbReference type="NCBI Taxonomy" id="44689"/>
    <lineage>
        <taxon>Eukaryota</taxon>
        <taxon>Amoebozoa</taxon>
        <taxon>Evosea</taxon>
        <taxon>Eumycetozoa</taxon>
        <taxon>Dictyostelia</taxon>
        <taxon>Dictyosteliales</taxon>
        <taxon>Dictyosteliaceae</taxon>
        <taxon>Dictyostelium</taxon>
    </lineage>
</organism>
<proteinExistence type="inferred from homology"/>
<evidence type="ECO:0000250" key="1"/>
<evidence type="ECO:0000255" key="2">
    <source>
        <dbReference type="PROSITE-ProRule" id="PRU00108"/>
    </source>
</evidence>
<evidence type="ECO:0000256" key="3">
    <source>
        <dbReference type="SAM" id="MobiDB-lite"/>
    </source>
</evidence>
<name>HBX14_DICDI</name>
<sequence>MNHNNNNYDFDNKNNSIGGGGGSSSRSSSSRSSNRSSSGSSGGSGSNSSSSINNIINSDKDFITERKQTKSPPLTLPNIKTTTTTTTTTTTTTTTTTKNENISSSESENSSSRVESPNCNKKVKKTKTITISPTGYNINSKDDINKFTTYGYTNEKSNARRDPKWITDIIERYNRLKSESPNNNYNGSSNNNNNINNINNNSNNTTSPCQSPSSNTATITSISSPTSSSSSLSSPSPSFSINNIVNQDVDGCDRMNYTLLSQNNNNNNNNNYNNNNNNNNNNNNNNNNTNTNNNGDECIVKPISLIQNKKSGQRSLKTKEHKEILEALYRVTLYPTSEETKIISQILGMTFGQVKSSFRHRREKLSKSGLFSYAKNLKNCGKCTVPLDNFFENCKYLTTKETEEFAAAYDVSFEQIKNYFKGKRAILNKLSSKANQDNDNNNNNENNDDSYSDEG</sequence>
<protein>
    <recommendedName>
        <fullName>Homeobox protein 14</fullName>
        <shortName>DdHbx-14</shortName>
    </recommendedName>
</protein>
<accession>Q54H69</accession>
<keyword id="KW-0175">Coiled coil</keyword>
<keyword id="KW-0217">Developmental protein</keyword>
<keyword id="KW-0238">DNA-binding</keyword>
<keyword id="KW-0371">Homeobox</keyword>
<keyword id="KW-0539">Nucleus</keyword>
<keyword id="KW-1185">Reference proteome</keyword>
<keyword id="KW-0677">Repeat</keyword>
<keyword id="KW-0804">Transcription</keyword>
<keyword id="KW-0805">Transcription regulation</keyword>
<reference key="1">
    <citation type="journal article" date="2005" name="Nature">
        <title>The genome of the social amoeba Dictyostelium discoideum.</title>
        <authorList>
            <person name="Eichinger L."/>
            <person name="Pachebat J.A."/>
            <person name="Gloeckner G."/>
            <person name="Rajandream M.A."/>
            <person name="Sucgang R."/>
            <person name="Berriman M."/>
            <person name="Song J."/>
            <person name="Olsen R."/>
            <person name="Szafranski K."/>
            <person name="Xu Q."/>
            <person name="Tunggal B."/>
            <person name="Kummerfeld S."/>
            <person name="Madera M."/>
            <person name="Konfortov B.A."/>
            <person name="Rivero F."/>
            <person name="Bankier A.T."/>
            <person name="Lehmann R."/>
            <person name="Hamlin N."/>
            <person name="Davies R."/>
            <person name="Gaudet P."/>
            <person name="Fey P."/>
            <person name="Pilcher K."/>
            <person name="Chen G."/>
            <person name="Saunders D."/>
            <person name="Sodergren E.J."/>
            <person name="Davis P."/>
            <person name="Kerhornou A."/>
            <person name="Nie X."/>
            <person name="Hall N."/>
            <person name="Anjard C."/>
            <person name="Hemphill L."/>
            <person name="Bason N."/>
            <person name="Farbrother P."/>
            <person name="Desany B."/>
            <person name="Just E."/>
            <person name="Morio T."/>
            <person name="Rost R."/>
            <person name="Churcher C.M."/>
            <person name="Cooper J."/>
            <person name="Haydock S."/>
            <person name="van Driessche N."/>
            <person name="Cronin A."/>
            <person name="Goodhead I."/>
            <person name="Muzny D.M."/>
            <person name="Mourier T."/>
            <person name="Pain A."/>
            <person name="Lu M."/>
            <person name="Harper D."/>
            <person name="Lindsay R."/>
            <person name="Hauser H."/>
            <person name="James K.D."/>
            <person name="Quiles M."/>
            <person name="Madan Babu M."/>
            <person name="Saito T."/>
            <person name="Buchrieser C."/>
            <person name="Wardroper A."/>
            <person name="Felder M."/>
            <person name="Thangavelu M."/>
            <person name="Johnson D."/>
            <person name="Knights A."/>
            <person name="Loulseged H."/>
            <person name="Mungall K.L."/>
            <person name="Oliver K."/>
            <person name="Price C."/>
            <person name="Quail M.A."/>
            <person name="Urushihara H."/>
            <person name="Hernandez J."/>
            <person name="Rabbinowitsch E."/>
            <person name="Steffen D."/>
            <person name="Sanders M."/>
            <person name="Ma J."/>
            <person name="Kohara Y."/>
            <person name="Sharp S."/>
            <person name="Simmonds M.N."/>
            <person name="Spiegler S."/>
            <person name="Tivey A."/>
            <person name="Sugano S."/>
            <person name="White B."/>
            <person name="Walker D."/>
            <person name="Woodward J.R."/>
            <person name="Winckler T."/>
            <person name="Tanaka Y."/>
            <person name="Shaulsky G."/>
            <person name="Schleicher M."/>
            <person name="Weinstock G.M."/>
            <person name="Rosenthal A."/>
            <person name="Cox E.C."/>
            <person name="Chisholm R.L."/>
            <person name="Gibbs R.A."/>
            <person name="Loomis W.F."/>
            <person name="Platzer M."/>
            <person name="Kay R.R."/>
            <person name="Williams J.G."/>
            <person name="Dear P.H."/>
            <person name="Noegel A.A."/>
            <person name="Barrell B.G."/>
            <person name="Kuspa A."/>
        </authorList>
    </citation>
    <scope>NUCLEOTIDE SEQUENCE [LARGE SCALE GENOMIC DNA]</scope>
    <source>
        <strain>AX4</strain>
    </source>
</reference>
<dbReference type="EMBL" id="AAFI02000148">
    <property type="protein sequence ID" value="EAL62550.1"/>
    <property type="molecule type" value="Genomic_DNA"/>
</dbReference>
<dbReference type="RefSeq" id="XP_636049.1">
    <property type="nucleotide sequence ID" value="XM_630957.1"/>
</dbReference>
<dbReference type="SMR" id="Q54H69"/>
<dbReference type="PaxDb" id="44689-DDB0220478"/>
<dbReference type="EnsemblProtists" id="EAL62550">
    <property type="protein sequence ID" value="EAL62550"/>
    <property type="gene ID" value="DDB_G0289677"/>
</dbReference>
<dbReference type="GeneID" id="8627259"/>
<dbReference type="KEGG" id="ddi:DDB_G0289677"/>
<dbReference type="dictyBase" id="DDB_G0289677">
    <property type="gene designation" value="hbx14"/>
</dbReference>
<dbReference type="VEuPathDB" id="AmoebaDB:DDB_G0277505"/>
<dbReference type="VEuPathDB" id="AmoebaDB:DDB_G0289677"/>
<dbReference type="HOGENOM" id="CLU_601919_0_0_1"/>
<dbReference type="InParanoid" id="Q54H69"/>
<dbReference type="OMA" id="VICFNEM"/>
<dbReference type="PRO" id="PR:Q54H69"/>
<dbReference type="Proteomes" id="UP000002195">
    <property type="component" value="Chromosome 5"/>
</dbReference>
<dbReference type="GO" id="GO:0005634">
    <property type="term" value="C:nucleus"/>
    <property type="evidence" value="ECO:0007669"/>
    <property type="project" value="UniProtKB-SubCell"/>
</dbReference>
<dbReference type="GO" id="GO:0003677">
    <property type="term" value="F:DNA binding"/>
    <property type="evidence" value="ECO:0007669"/>
    <property type="project" value="UniProtKB-KW"/>
</dbReference>
<dbReference type="CDD" id="cd00086">
    <property type="entry name" value="homeodomain"/>
    <property type="match status" value="2"/>
</dbReference>
<dbReference type="Gene3D" id="1.10.10.60">
    <property type="entry name" value="Homeodomain-like"/>
    <property type="match status" value="2"/>
</dbReference>
<dbReference type="InterPro" id="IPR050460">
    <property type="entry name" value="Distal-less_Homeobox_TF"/>
</dbReference>
<dbReference type="InterPro" id="IPR001356">
    <property type="entry name" value="HD"/>
</dbReference>
<dbReference type="InterPro" id="IPR009057">
    <property type="entry name" value="Homeodomain-like_sf"/>
</dbReference>
<dbReference type="PANTHER" id="PTHR24327:SF41">
    <property type="entry name" value="BRAIN-SPECIFIC HOMEOBOX PROTEIN"/>
    <property type="match status" value="1"/>
</dbReference>
<dbReference type="PANTHER" id="PTHR24327">
    <property type="entry name" value="HOMEOBOX PROTEIN"/>
    <property type="match status" value="1"/>
</dbReference>
<dbReference type="Pfam" id="PF00046">
    <property type="entry name" value="Homeodomain"/>
    <property type="match status" value="1"/>
</dbReference>
<dbReference type="SMART" id="SM00389">
    <property type="entry name" value="HOX"/>
    <property type="match status" value="2"/>
</dbReference>
<dbReference type="SUPFAM" id="SSF46689">
    <property type="entry name" value="Homeodomain-like"/>
    <property type="match status" value="2"/>
</dbReference>
<dbReference type="PROSITE" id="PS50071">
    <property type="entry name" value="HOMEOBOX_2"/>
    <property type="match status" value="1"/>
</dbReference>
<gene>
    <name type="primary">hbx14</name>
    <name type="ORF">DDB_G0289677</name>
</gene>